<accession>Q3AMD6</accession>
<organism>
    <name type="scientific">Synechococcus sp. (strain CC9605)</name>
    <dbReference type="NCBI Taxonomy" id="110662"/>
    <lineage>
        <taxon>Bacteria</taxon>
        <taxon>Bacillati</taxon>
        <taxon>Cyanobacteriota</taxon>
        <taxon>Cyanophyceae</taxon>
        <taxon>Synechococcales</taxon>
        <taxon>Synechococcaceae</taxon>
        <taxon>Synechococcus</taxon>
    </lineage>
</organism>
<dbReference type="EMBL" id="CP000110">
    <property type="protein sequence ID" value="ABB34246.1"/>
    <property type="molecule type" value="Genomic_DNA"/>
</dbReference>
<dbReference type="RefSeq" id="WP_011363480.1">
    <property type="nucleotide sequence ID" value="NC_007516.1"/>
</dbReference>
<dbReference type="SMR" id="Q3AMD6"/>
<dbReference type="STRING" id="110662.Syncc9605_0472"/>
<dbReference type="KEGG" id="syd:Syncc9605_0472"/>
<dbReference type="eggNOG" id="ENOG50339PB">
    <property type="taxonomic scope" value="Bacteria"/>
</dbReference>
<dbReference type="HOGENOM" id="CLU_215415_0_0_3"/>
<dbReference type="OrthoDB" id="532820at2"/>
<dbReference type="GO" id="GO:0009523">
    <property type="term" value="C:photosystem II"/>
    <property type="evidence" value="ECO:0007669"/>
    <property type="project" value="UniProtKB-KW"/>
</dbReference>
<dbReference type="GO" id="GO:0031676">
    <property type="term" value="C:plasma membrane-derived thylakoid membrane"/>
    <property type="evidence" value="ECO:0007669"/>
    <property type="project" value="UniProtKB-SubCell"/>
</dbReference>
<dbReference type="GO" id="GO:0019684">
    <property type="term" value="P:photosynthesis, light reaction"/>
    <property type="evidence" value="ECO:0007669"/>
    <property type="project" value="InterPro"/>
</dbReference>
<dbReference type="HAMAP" id="MF_00438">
    <property type="entry name" value="PSII_PsbM"/>
    <property type="match status" value="1"/>
</dbReference>
<dbReference type="InterPro" id="IPR007826">
    <property type="entry name" value="PSII_PsbM"/>
</dbReference>
<dbReference type="InterPro" id="IPR037269">
    <property type="entry name" value="PSII_PsbM_sf"/>
</dbReference>
<dbReference type="NCBIfam" id="TIGR03038">
    <property type="entry name" value="PS_II_psbM"/>
    <property type="match status" value="1"/>
</dbReference>
<dbReference type="Pfam" id="PF05151">
    <property type="entry name" value="PsbM"/>
    <property type="match status" value="1"/>
</dbReference>
<dbReference type="SUPFAM" id="SSF161033">
    <property type="entry name" value="Photosystem II reaction center protein M, PsbM"/>
    <property type="match status" value="1"/>
</dbReference>
<name>PSBM_SYNSC</name>
<sequence length="34" mass="3758">METNDLGFVASLMFILVPAIFLIVLYIGTQNNEA</sequence>
<gene>
    <name evidence="1" type="primary">psbM</name>
    <name type="ordered locus">Syncc9605_0472</name>
</gene>
<feature type="chain" id="PRO_1000025965" description="Photosystem II reaction center protein M">
    <location>
        <begin position="1"/>
        <end position="34"/>
    </location>
</feature>
<feature type="transmembrane region" description="Helical" evidence="1">
    <location>
        <begin position="7"/>
        <end position="27"/>
    </location>
</feature>
<protein>
    <recommendedName>
        <fullName evidence="1">Photosystem II reaction center protein M</fullName>
        <shortName evidence="1">PSII-M</shortName>
    </recommendedName>
</protein>
<keyword id="KW-0472">Membrane</keyword>
<keyword id="KW-0602">Photosynthesis</keyword>
<keyword id="KW-0604">Photosystem II</keyword>
<keyword id="KW-0674">Reaction center</keyword>
<keyword id="KW-0793">Thylakoid</keyword>
<keyword id="KW-0812">Transmembrane</keyword>
<keyword id="KW-1133">Transmembrane helix</keyword>
<comment type="function">
    <text evidence="1">One of the components of the core complex of photosystem II (PSII). PSII is a light-driven water:plastoquinone oxidoreductase that uses light energy to abstract electrons from H(2)O, generating O(2) and a proton gradient subsequently used for ATP formation. It consists of a core antenna complex that captures photons, and an electron transfer chain that converts photonic excitation into a charge separation. This subunit is found at the monomer-monomer interface.</text>
</comment>
<comment type="subunit">
    <text evidence="1">PSII is composed of 1 copy each of membrane proteins PsbA, PsbB, PsbC, PsbD, PsbE, PsbF, PsbH, PsbI, PsbJ, PsbK, PsbL, PsbM, PsbT, PsbX, PsbY, PsbZ, Psb30/Ycf12, peripheral proteins PsbO, CyanoQ (PsbQ), PsbU, PsbV and a large number of cofactors. It forms dimeric complexes.</text>
</comment>
<comment type="subcellular location">
    <subcellularLocation>
        <location evidence="1">Cellular thylakoid membrane</location>
        <topology evidence="1">Single-pass membrane protein</topology>
    </subcellularLocation>
</comment>
<comment type="similarity">
    <text evidence="1">Belongs to the PsbM family.</text>
</comment>
<evidence type="ECO:0000255" key="1">
    <source>
        <dbReference type="HAMAP-Rule" id="MF_00438"/>
    </source>
</evidence>
<reference key="1">
    <citation type="submission" date="2005-07" db="EMBL/GenBank/DDBJ databases">
        <title>Complete sequence of Synechococcus sp. CC9605.</title>
        <authorList>
            <consortium name="US DOE Joint Genome Institute"/>
            <person name="Copeland A."/>
            <person name="Lucas S."/>
            <person name="Lapidus A."/>
            <person name="Barry K."/>
            <person name="Detter J.C."/>
            <person name="Glavina T."/>
            <person name="Hammon N."/>
            <person name="Israni S."/>
            <person name="Pitluck S."/>
            <person name="Schmutz J."/>
            <person name="Martinez M."/>
            <person name="Larimer F."/>
            <person name="Land M."/>
            <person name="Kyrpides N."/>
            <person name="Ivanova N."/>
            <person name="Richardson P."/>
        </authorList>
    </citation>
    <scope>NUCLEOTIDE SEQUENCE [LARGE SCALE GENOMIC DNA]</scope>
    <source>
        <strain>CC9605</strain>
    </source>
</reference>
<proteinExistence type="inferred from homology"/>